<accession>B5YQE7</accession>
<organism>
    <name type="scientific">Escherichia coli O157:H7 (strain EC4115 / EHEC)</name>
    <dbReference type="NCBI Taxonomy" id="444450"/>
    <lineage>
        <taxon>Bacteria</taxon>
        <taxon>Pseudomonadati</taxon>
        <taxon>Pseudomonadota</taxon>
        <taxon>Gammaproteobacteria</taxon>
        <taxon>Enterobacterales</taxon>
        <taxon>Enterobacteriaceae</taxon>
        <taxon>Escherichia</taxon>
    </lineage>
</organism>
<gene>
    <name evidence="1" type="primary">yqgF</name>
    <name type="ordered locus">ECH74115_4252</name>
</gene>
<reference key="1">
    <citation type="journal article" date="2011" name="Proc. Natl. Acad. Sci. U.S.A.">
        <title>Genomic anatomy of Escherichia coli O157:H7 outbreaks.</title>
        <authorList>
            <person name="Eppinger M."/>
            <person name="Mammel M.K."/>
            <person name="Leclerc J.E."/>
            <person name="Ravel J."/>
            <person name="Cebula T.A."/>
        </authorList>
    </citation>
    <scope>NUCLEOTIDE SEQUENCE [LARGE SCALE GENOMIC DNA]</scope>
    <source>
        <strain>EC4115 / EHEC</strain>
    </source>
</reference>
<dbReference type="EC" id="3.1.-.-" evidence="1"/>
<dbReference type="EMBL" id="CP001164">
    <property type="protein sequence ID" value="ACI35426.1"/>
    <property type="molecule type" value="Genomic_DNA"/>
</dbReference>
<dbReference type="SMR" id="B5YQE7"/>
<dbReference type="KEGG" id="ecf:ECH74115_4252"/>
<dbReference type="HOGENOM" id="CLU_098240_3_0_6"/>
<dbReference type="GO" id="GO:0005829">
    <property type="term" value="C:cytosol"/>
    <property type="evidence" value="ECO:0007669"/>
    <property type="project" value="TreeGrafter"/>
</dbReference>
<dbReference type="GO" id="GO:0004518">
    <property type="term" value="F:nuclease activity"/>
    <property type="evidence" value="ECO:0007669"/>
    <property type="project" value="UniProtKB-KW"/>
</dbReference>
<dbReference type="GO" id="GO:0000967">
    <property type="term" value="P:rRNA 5'-end processing"/>
    <property type="evidence" value="ECO:0007669"/>
    <property type="project" value="UniProtKB-UniRule"/>
</dbReference>
<dbReference type="CDD" id="cd16964">
    <property type="entry name" value="YqgF"/>
    <property type="match status" value="1"/>
</dbReference>
<dbReference type="FunFam" id="3.30.420.140:FF:000002">
    <property type="entry name" value="Putative pre-16S rRNA nuclease"/>
    <property type="match status" value="1"/>
</dbReference>
<dbReference type="Gene3D" id="3.30.420.140">
    <property type="entry name" value="YqgF/RNase H-like domain"/>
    <property type="match status" value="1"/>
</dbReference>
<dbReference type="HAMAP" id="MF_00651">
    <property type="entry name" value="Nuclease_YqgF"/>
    <property type="match status" value="1"/>
</dbReference>
<dbReference type="InterPro" id="IPR012337">
    <property type="entry name" value="RNaseH-like_sf"/>
</dbReference>
<dbReference type="InterPro" id="IPR005227">
    <property type="entry name" value="YqgF"/>
</dbReference>
<dbReference type="InterPro" id="IPR006641">
    <property type="entry name" value="YqgF/RNaseH-like_dom"/>
</dbReference>
<dbReference type="InterPro" id="IPR037027">
    <property type="entry name" value="YqgF/RNaseH-like_dom_sf"/>
</dbReference>
<dbReference type="NCBIfam" id="TIGR00250">
    <property type="entry name" value="RNAse_H_YqgF"/>
    <property type="match status" value="1"/>
</dbReference>
<dbReference type="PANTHER" id="PTHR33317">
    <property type="entry name" value="POLYNUCLEOTIDYL TRANSFERASE, RIBONUCLEASE H-LIKE SUPERFAMILY PROTEIN"/>
    <property type="match status" value="1"/>
</dbReference>
<dbReference type="PANTHER" id="PTHR33317:SF4">
    <property type="entry name" value="POLYNUCLEOTIDYL TRANSFERASE, RIBONUCLEASE H-LIKE SUPERFAMILY PROTEIN"/>
    <property type="match status" value="1"/>
</dbReference>
<dbReference type="Pfam" id="PF03652">
    <property type="entry name" value="RuvX"/>
    <property type="match status" value="1"/>
</dbReference>
<dbReference type="SMART" id="SM00732">
    <property type="entry name" value="YqgFc"/>
    <property type="match status" value="1"/>
</dbReference>
<dbReference type="SUPFAM" id="SSF53098">
    <property type="entry name" value="Ribonuclease H-like"/>
    <property type="match status" value="1"/>
</dbReference>
<sequence length="138" mass="15200">MSGTLLAFDFGTKSIGVAVGQRITGTARPLPAIKAQDGTPDWNLIERLLKEWQPDEIIVGLPLNMDGTEQPLTARARKFANRIHGRFGVEVKLHDERLSTVEARSGLFEQGGYRALNKGKIDSASAVIILESYFEQGY</sequence>
<name>YQGF_ECO5E</name>
<evidence type="ECO:0000255" key="1">
    <source>
        <dbReference type="HAMAP-Rule" id="MF_00651"/>
    </source>
</evidence>
<proteinExistence type="inferred from homology"/>
<comment type="function">
    <text evidence="1">Could be a nuclease involved in processing of the 5'-end of pre-16S rRNA.</text>
</comment>
<comment type="subcellular location">
    <subcellularLocation>
        <location evidence="1">Cytoplasm</location>
    </subcellularLocation>
</comment>
<comment type="similarity">
    <text evidence="1">Belongs to the YqgF nuclease family.</text>
</comment>
<keyword id="KW-0963">Cytoplasm</keyword>
<keyword id="KW-0378">Hydrolase</keyword>
<keyword id="KW-0540">Nuclease</keyword>
<keyword id="KW-0690">Ribosome biogenesis</keyword>
<feature type="chain" id="PRO_1000131028" description="Putative pre-16S rRNA nuclease">
    <location>
        <begin position="1"/>
        <end position="138"/>
    </location>
</feature>
<protein>
    <recommendedName>
        <fullName evidence="1">Putative pre-16S rRNA nuclease</fullName>
        <ecNumber evidence="1">3.1.-.-</ecNumber>
    </recommendedName>
</protein>